<reference key="1">
    <citation type="journal article" date="2002" name="J. Gen. Virol.">
        <title>Genomic organization of infectious salmon anaemia virus.</title>
        <authorList>
            <person name="Clouthier S.C."/>
            <person name="Rector T."/>
            <person name="Brown N.E."/>
            <person name="Anderson E.D."/>
        </authorList>
    </citation>
    <scope>NUCLEOTIDE SEQUENCE [GENOMIC RNA]</scope>
</reference>
<reference key="2">
    <citation type="journal article" date="2004" name="J. Virol.">
        <title>Identification and characterization of viral structural proteins of infectious salmon anemia virus.</title>
        <authorList>
            <person name="Falk K."/>
            <person name="Aspehaug V."/>
            <person name="Vlasak R."/>
            <person name="Endresen C."/>
        </authorList>
    </citation>
    <scope>SUBCELLULAR LOCATION</scope>
</reference>
<reference key="3">
    <citation type="journal article" date="2011" name="Virus Res.">
        <title>Infectious salmon anemia virus--genetics and pathogenesis.</title>
        <authorList>
            <person name="Cottet L."/>
            <person name="Rivas-Aravena A."/>
            <person name="Cortez-San Martin M."/>
            <person name="Sandino A.M."/>
            <person name="Spencer E."/>
        </authorList>
    </citation>
    <scope>REVIEW</scope>
</reference>
<reference key="4">
    <citation type="journal article" date="2017" name="Virol. J.">
        <title>Subcellular localization and interactions of Infectious Salmon Anemia Virus (ISAV) M1 and NEP as well as host Hsc70.</title>
        <authorList>
            <person name="Zhang W."/>
            <person name="Cai C."/>
            <person name="Lin L."/>
            <person name="Tao Y.J."/>
            <person name="Jin M."/>
        </authorList>
    </citation>
    <scope>FUNCTION</scope>
    <scope>SUBCELLULAR LOCATION</scope>
    <scope>INTERACTION WITH HOST HSC70</scope>
</reference>
<evidence type="ECO:0000255" key="1"/>
<evidence type="ECO:0000256" key="2">
    <source>
        <dbReference type="SAM" id="MobiDB-lite"/>
    </source>
</evidence>
<evidence type="ECO:0000269" key="3">
    <source>
    </source>
</evidence>
<evidence type="ECO:0000269" key="4">
    <source>
    </source>
</evidence>
<evidence type="ECO:0000303" key="5">
    <source>
    </source>
</evidence>
<evidence type="ECO:0000303" key="6">
    <source>
    </source>
</evidence>
<evidence type="ECO:0000303" key="7">
    <source>
    </source>
</evidence>
<organism>
    <name type="scientific">Infectious salmon anemia virus (isolate Atlantic salmon/Norway/810/9/99)</name>
    <name type="common">ISAV</name>
    <dbReference type="NCBI Taxonomy" id="652965"/>
    <lineage>
        <taxon>Viruses</taxon>
        <taxon>Riboviria</taxon>
        <taxon>Orthornavirae</taxon>
        <taxon>Negarnaviricota</taxon>
        <taxon>Polyploviricotina</taxon>
        <taxon>Insthoviricetes</taxon>
        <taxon>Articulavirales</taxon>
        <taxon>Orthomyxoviridae</taxon>
        <taxon>Isavirus</taxon>
        <taxon>Isavirus salaris</taxon>
    </lineage>
</organism>
<name>M1_ISAV8</name>
<sequence>MHERSKPKTTGADQTCLEEEKETRGGLRNGSSSDTGGRERTDRGVSCSRRKNCEGQNLEPIGERDDQSSDDDPLLCDERSTIGRHGNADERPHQELAEGGIRMPGRGWWRGKMGNGVWYDFTRHGRGEDDAEGAENNATQQDADVCSGCKFESPREFRKGHRRCSSSTSGILLDREDGASGVPEVSFKERMEAEKKKLKELDDKIYKLRRRLRKMEYKKMGINREIDKLEDSVQ</sequence>
<comment type="function">
    <text evidence="6 7">May play a role in virus replication, from virus entry and uncoating to assembly and budding of the virus particle (PubMed:20979983). Interaction of viral NEP with M1-Hsc70 is thought to promote nuclear export of the viral encapsidated genomes (PubMed:28202040).</text>
</comment>
<comment type="subunit">
    <text evidence="4">Interacts with host HSC70.</text>
</comment>
<comment type="subcellular location">
    <subcellularLocation>
        <location evidence="3">Virion</location>
    </subcellularLocation>
    <subcellularLocation>
        <location evidence="4">Host cytoplasm</location>
    </subcellularLocation>
    <subcellularLocation>
        <location evidence="4">Host nucleus</location>
    </subcellularLocation>
</comment>
<comment type="alternative products">
    <event type="alternative splicing"/>
    <isoform>
        <id>Q8V3U4-1</id>
        <name>Matrix protein 1</name>
        <sequence type="displayed"/>
    </isoform>
    <isoform>
        <id>Q8V3U3-1</id>
        <name>Matrix protein 2</name>
        <sequence type="external"/>
    </isoform>
</comment>
<feature type="chain" id="PRO_0000403924" description="Matrix protein 1">
    <location>
        <begin position="1"/>
        <end position="234"/>
    </location>
</feature>
<feature type="region of interest" description="Disordered" evidence="2">
    <location>
        <begin position="1"/>
        <end position="103"/>
    </location>
</feature>
<feature type="coiled-coil region" evidence="1">
    <location>
        <begin position="183"/>
        <end position="234"/>
    </location>
</feature>
<feature type="compositionally biased region" description="Basic and acidic residues" evidence="2">
    <location>
        <begin position="76"/>
        <end position="96"/>
    </location>
</feature>
<accession>Q8V3U4</accession>
<organismHost>
    <name type="scientific">Gadus morhua</name>
    <name type="common">Atlantic cod</name>
    <dbReference type="NCBI Taxonomy" id="8049"/>
</organismHost>
<organismHost>
    <name type="scientific">Oncorhynchus kisutch</name>
    <name type="common">Coho salmon</name>
    <name type="synonym">Salmo kisutch</name>
    <dbReference type="NCBI Taxonomy" id="8019"/>
</organismHost>
<organismHost>
    <name type="scientific">Oncorhynchus mykiss</name>
    <name type="common">Rainbow trout</name>
    <name type="synonym">Salmo gairdneri</name>
    <dbReference type="NCBI Taxonomy" id="8022"/>
</organismHost>
<organismHost>
    <name type="scientific">Pollachius virens</name>
    <name type="common">Saithe</name>
    <name type="synonym">Gadus virens</name>
    <dbReference type="NCBI Taxonomy" id="8060"/>
</organismHost>
<organismHost>
    <name type="scientific">Salmo salar</name>
    <name type="common">Atlantic salmon</name>
    <dbReference type="NCBI Taxonomy" id="8030"/>
</organismHost>
<organismHost>
    <name type="scientific">Salmo trutta</name>
    <name type="common">Brown trout</name>
    <dbReference type="NCBI Taxonomy" id="8032"/>
</organismHost>
<gene>
    <name evidence="6" type="primary">Segment-8</name>
    <name type="ORF">s8ORF1</name>
</gene>
<keyword id="KW-0025">Alternative splicing</keyword>
<keyword id="KW-0175">Coiled coil</keyword>
<keyword id="KW-1035">Host cytoplasm</keyword>
<keyword id="KW-1048">Host nucleus</keyword>
<keyword id="KW-1185">Reference proteome</keyword>
<keyword id="KW-0946">Virion</keyword>
<dbReference type="EMBL" id="AF404340">
    <property type="protein sequence ID" value="AAL67954.1"/>
    <property type="molecule type" value="Genomic_RNA"/>
</dbReference>
<dbReference type="RefSeq" id="YP_145796.1">
    <property type="nucleotide sequence ID" value="NC_006497.1"/>
</dbReference>
<dbReference type="SMR" id="Q8V3U4"/>
<dbReference type="KEGG" id="vg:5075847"/>
<dbReference type="Proteomes" id="UP000008772">
    <property type="component" value="Genome"/>
</dbReference>
<dbReference type="GO" id="GO:0030430">
    <property type="term" value="C:host cell cytoplasm"/>
    <property type="evidence" value="ECO:0007669"/>
    <property type="project" value="UniProtKB-SubCell"/>
</dbReference>
<dbReference type="GO" id="GO:0042025">
    <property type="term" value="C:host cell nucleus"/>
    <property type="evidence" value="ECO:0007669"/>
    <property type="project" value="UniProtKB-SubCell"/>
</dbReference>
<dbReference type="GO" id="GO:0044423">
    <property type="term" value="C:virion component"/>
    <property type="evidence" value="ECO:0007669"/>
    <property type="project" value="UniProtKB-KW"/>
</dbReference>
<protein>
    <recommendedName>
        <fullName evidence="5">Matrix protein 1</fullName>
        <shortName>M1</shortName>
    </recommendedName>
    <alternativeName>
        <fullName>Protein P6</fullName>
        <shortName>P6</shortName>
    </alternativeName>
    <alternativeName>
        <fullName>vp22</fullName>
    </alternativeName>
</protein>
<proteinExistence type="evidence at protein level"/>